<organism>
    <name type="scientific">Cereibacter sphaeroides (strain ATCC 17023 / DSM 158 / JCM 6121 / CCUG 31486 / LMG 2827 / NBRC 12203 / NCIMB 8253 / ATH 2.4.1.)</name>
    <name type="common">Rhodobacter sphaeroides</name>
    <dbReference type="NCBI Taxonomy" id="272943"/>
    <lineage>
        <taxon>Bacteria</taxon>
        <taxon>Pseudomonadati</taxon>
        <taxon>Pseudomonadota</taxon>
        <taxon>Alphaproteobacteria</taxon>
        <taxon>Rhodobacterales</taxon>
        <taxon>Paracoccaceae</taxon>
        <taxon>Cereibacter</taxon>
    </lineage>
</organism>
<accession>Q3J2B7</accession>
<protein>
    <recommendedName>
        <fullName evidence="1">Release factor glutamine methyltransferase</fullName>
        <shortName evidence="1">RF MTase</shortName>
        <ecNumber evidence="1">2.1.1.297</ecNumber>
    </recommendedName>
    <alternativeName>
        <fullName evidence="1">N5-glutamine methyltransferase PrmC</fullName>
    </alternativeName>
    <alternativeName>
        <fullName evidence="1">Protein-(glutamine-N5) MTase PrmC</fullName>
    </alternativeName>
    <alternativeName>
        <fullName evidence="1">Protein-glutamine N-methyltransferase PrmC</fullName>
    </alternativeName>
</protein>
<gene>
    <name evidence="1" type="primary">prmC</name>
    <name type="ordered locus">RHOS4_14990</name>
    <name type="ORF">RSP_2906</name>
</gene>
<evidence type="ECO:0000255" key="1">
    <source>
        <dbReference type="HAMAP-Rule" id="MF_02126"/>
    </source>
</evidence>
<sequence>MRAADALRAAVPRLAAAGIDEAARDARRLLAHAMAIDPARLTLHLPDPLPPEAAARFEAALAARAARQPVGQIVGERLFWGRRFRVTRDTLDPRPETEGLIEAALAEPFATVLDLGTGTGCIAVTLLAERPAAHGIATDLSPAALAVAAENAAALGVASRLELRLSDWFAAVPERVDLILSNPPYIAADEMAALAPEVRLWEPHLALSPGGDGLDAYRAIARGAPAHLRPGGRLLLEIGAAQGRAVAGLVEAAGLARVSVLPDLDGRDRLVSARLPAA</sequence>
<dbReference type="EC" id="2.1.1.297" evidence="1"/>
<dbReference type="EMBL" id="CP000143">
    <property type="protein sequence ID" value="ABA79067.1"/>
    <property type="molecule type" value="Genomic_DNA"/>
</dbReference>
<dbReference type="RefSeq" id="WP_011337836.1">
    <property type="nucleotide sequence ID" value="NC_007493.2"/>
</dbReference>
<dbReference type="RefSeq" id="YP_352968.1">
    <property type="nucleotide sequence ID" value="NC_007493.2"/>
</dbReference>
<dbReference type="SMR" id="Q3J2B7"/>
<dbReference type="STRING" id="272943.RSP_2906"/>
<dbReference type="EnsemblBacteria" id="ABA79067">
    <property type="protein sequence ID" value="ABA79067"/>
    <property type="gene ID" value="RSP_2906"/>
</dbReference>
<dbReference type="GeneID" id="3720646"/>
<dbReference type="KEGG" id="rsp:RSP_2906"/>
<dbReference type="PATRIC" id="fig|272943.9.peg.1843"/>
<dbReference type="eggNOG" id="COG2890">
    <property type="taxonomic scope" value="Bacteria"/>
</dbReference>
<dbReference type="OrthoDB" id="9800643at2"/>
<dbReference type="PhylomeDB" id="Q3J2B7"/>
<dbReference type="Proteomes" id="UP000002703">
    <property type="component" value="Chromosome 1"/>
</dbReference>
<dbReference type="GO" id="GO:0003676">
    <property type="term" value="F:nucleic acid binding"/>
    <property type="evidence" value="ECO:0007669"/>
    <property type="project" value="InterPro"/>
</dbReference>
<dbReference type="GO" id="GO:0102559">
    <property type="term" value="F:protein-(glutamine-N5) methyltransferase activity"/>
    <property type="evidence" value="ECO:0007669"/>
    <property type="project" value="UniProtKB-EC"/>
</dbReference>
<dbReference type="GO" id="GO:0036009">
    <property type="term" value="F:protein-glutamine N-methyltransferase activity"/>
    <property type="evidence" value="ECO:0007669"/>
    <property type="project" value="UniProtKB-UniRule"/>
</dbReference>
<dbReference type="GO" id="GO:0032259">
    <property type="term" value="P:methylation"/>
    <property type="evidence" value="ECO:0007669"/>
    <property type="project" value="UniProtKB-KW"/>
</dbReference>
<dbReference type="CDD" id="cd02440">
    <property type="entry name" value="AdoMet_MTases"/>
    <property type="match status" value="1"/>
</dbReference>
<dbReference type="Gene3D" id="1.10.8.10">
    <property type="entry name" value="DNA helicase RuvA subunit, C-terminal domain"/>
    <property type="match status" value="1"/>
</dbReference>
<dbReference type="Gene3D" id="3.40.50.150">
    <property type="entry name" value="Vaccinia Virus protein VP39"/>
    <property type="match status" value="1"/>
</dbReference>
<dbReference type="HAMAP" id="MF_02126">
    <property type="entry name" value="RF_methyltr_PrmC"/>
    <property type="match status" value="1"/>
</dbReference>
<dbReference type="InterPro" id="IPR002052">
    <property type="entry name" value="DNA_methylase_N6_adenine_CS"/>
</dbReference>
<dbReference type="InterPro" id="IPR004556">
    <property type="entry name" value="HemK-like"/>
</dbReference>
<dbReference type="InterPro" id="IPR050320">
    <property type="entry name" value="N5-glutamine_MTase"/>
</dbReference>
<dbReference type="InterPro" id="IPR040758">
    <property type="entry name" value="PrmC_N"/>
</dbReference>
<dbReference type="InterPro" id="IPR019874">
    <property type="entry name" value="RF_methyltr_PrmC"/>
</dbReference>
<dbReference type="InterPro" id="IPR029063">
    <property type="entry name" value="SAM-dependent_MTases_sf"/>
</dbReference>
<dbReference type="InterPro" id="IPR007848">
    <property type="entry name" value="Small_mtfrase_dom"/>
</dbReference>
<dbReference type="NCBIfam" id="TIGR00536">
    <property type="entry name" value="hemK_fam"/>
    <property type="match status" value="1"/>
</dbReference>
<dbReference type="NCBIfam" id="TIGR03534">
    <property type="entry name" value="RF_mod_PrmC"/>
    <property type="match status" value="1"/>
</dbReference>
<dbReference type="PANTHER" id="PTHR18895">
    <property type="entry name" value="HEMK METHYLTRANSFERASE"/>
    <property type="match status" value="1"/>
</dbReference>
<dbReference type="PANTHER" id="PTHR18895:SF74">
    <property type="entry name" value="MTRF1L RELEASE FACTOR GLUTAMINE METHYLTRANSFERASE"/>
    <property type="match status" value="1"/>
</dbReference>
<dbReference type="Pfam" id="PF05175">
    <property type="entry name" value="MTS"/>
    <property type="match status" value="1"/>
</dbReference>
<dbReference type="Pfam" id="PF17827">
    <property type="entry name" value="PrmC_N"/>
    <property type="match status" value="1"/>
</dbReference>
<dbReference type="SUPFAM" id="SSF53335">
    <property type="entry name" value="S-adenosyl-L-methionine-dependent methyltransferases"/>
    <property type="match status" value="1"/>
</dbReference>
<proteinExistence type="inferred from homology"/>
<reference key="1">
    <citation type="submission" date="2005-09" db="EMBL/GenBank/DDBJ databases">
        <title>Complete sequence of chromosome 1 of Rhodobacter sphaeroides 2.4.1.</title>
        <authorList>
            <person name="Copeland A."/>
            <person name="Lucas S."/>
            <person name="Lapidus A."/>
            <person name="Barry K."/>
            <person name="Detter J.C."/>
            <person name="Glavina T."/>
            <person name="Hammon N."/>
            <person name="Israni S."/>
            <person name="Pitluck S."/>
            <person name="Richardson P."/>
            <person name="Mackenzie C."/>
            <person name="Choudhary M."/>
            <person name="Larimer F."/>
            <person name="Hauser L.J."/>
            <person name="Land M."/>
            <person name="Donohue T.J."/>
            <person name="Kaplan S."/>
        </authorList>
    </citation>
    <scope>NUCLEOTIDE SEQUENCE [LARGE SCALE GENOMIC DNA]</scope>
    <source>
        <strain>ATCC 17023 / DSM 158 / JCM 6121 / CCUG 31486 / LMG 2827 / NBRC 12203 / NCIMB 8253 / ATH 2.4.1.</strain>
    </source>
</reference>
<keyword id="KW-0489">Methyltransferase</keyword>
<keyword id="KW-1185">Reference proteome</keyword>
<keyword id="KW-0949">S-adenosyl-L-methionine</keyword>
<keyword id="KW-0808">Transferase</keyword>
<comment type="function">
    <text evidence="1">Methylates the class 1 translation termination release factors RF1/PrfA and RF2/PrfB on the glutamine residue of the universally conserved GGQ motif.</text>
</comment>
<comment type="catalytic activity">
    <reaction evidence="1">
        <text>L-glutaminyl-[peptide chain release factor] + S-adenosyl-L-methionine = N(5)-methyl-L-glutaminyl-[peptide chain release factor] + S-adenosyl-L-homocysteine + H(+)</text>
        <dbReference type="Rhea" id="RHEA:42896"/>
        <dbReference type="Rhea" id="RHEA-COMP:10271"/>
        <dbReference type="Rhea" id="RHEA-COMP:10272"/>
        <dbReference type="ChEBI" id="CHEBI:15378"/>
        <dbReference type="ChEBI" id="CHEBI:30011"/>
        <dbReference type="ChEBI" id="CHEBI:57856"/>
        <dbReference type="ChEBI" id="CHEBI:59789"/>
        <dbReference type="ChEBI" id="CHEBI:61891"/>
        <dbReference type="EC" id="2.1.1.297"/>
    </reaction>
</comment>
<comment type="similarity">
    <text evidence="1">Belongs to the protein N5-glutamine methyltransferase family. PrmC subfamily.</text>
</comment>
<feature type="chain" id="PRO_0000414537" description="Release factor glutamine methyltransferase">
    <location>
        <begin position="1"/>
        <end position="278"/>
    </location>
</feature>
<feature type="binding site" evidence="1">
    <location>
        <begin position="116"/>
        <end position="120"/>
    </location>
    <ligand>
        <name>S-adenosyl-L-methionine</name>
        <dbReference type="ChEBI" id="CHEBI:59789"/>
    </ligand>
</feature>
<feature type="binding site" evidence="1">
    <location>
        <position position="139"/>
    </location>
    <ligand>
        <name>S-adenosyl-L-methionine</name>
        <dbReference type="ChEBI" id="CHEBI:59789"/>
    </ligand>
</feature>
<feature type="binding site" evidence="1">
    <location>
        <position position="168"/>
    </location>
    <ligand>
        <name>S-adenosyl-L-methionine</name>
        <dbReference type="ChEBI" id="CHEBI:59789"/>
    </ligand>
</feature>
<feature type="binding site" evidence="1">
    <location>
        <begin position="182"/>
        <end position="185"/>
    </location>
    <ligand>
        <name>substrate</name>
    </ligand>
</feature>
<feature type="binding site" evidence="1">
    <location>
        <position position="182"/>
    </location>
    <ligand>
        <name>S-adenosyl-L-methionine</name>
        <dbReference type="ChEBI" id="CHEBI:59789"/>
    </ligand>
</feature>
<name>PRMC_CERS4</name>